<reference key="1">
    <citation type="journal article" date="2005" name="Nature">
        <title>The genome sequence of the rice blast fungus Magnaporthe grisea.</title>
        <authorList>
            <person name="Dean R.A."/>
            <person name="Talbot N.J."/>
            <person name="Ebbole D.J."/>
            <person name="Farman M.L."/>
            <person name="Mitchell T.K."/>
            <person name="Orbach M.J."/>
            <person name="Thon M.R."/>
            <person name="Kulkarni R."/>
            <person name="Xu J.-R."/>
            <person name="Pan H."/>
            <person name="Read N.D."/>
            <person name="Lee Y.-H."/>
            <person name="Carbone I."/>
            <person name="Brown D."/>
            <person name="Oh Y.Y."/>
            <person name="Donofrio N."/>
            <person name="Jeong J.S."/>
            <person name="Soanes D.M."/>
            <person name="Djonovic S."/>
            <person name="Kolomiets E."/>
            <person name="Rehmeyer C."/>
            <person name="Li W."/>
            <person name="Harding M."/>
            <person name="Kim S."/>
            <person name="Lebrun M.-H."/>
            <person name="Bohnert H."/>
            <person name="Coughlan S."/>
            <person name="Butler J."/>
            <person name="Calvo S.E."/>
            <person name="Ma L.-J."/>
            <person name="Nicol R."/>
            <person name="Purcell S."/>
            <person name="Nusbaum C."/>
            <person name="Galagan J.E."/>
            <person name="Birren B.W."/>
        </authorList>
    </citation>
    <scope>NUCLEOTIDE SEQUENCE [LARGE SCALE GENOMIC DNA]</scope>
    <source>
        <strain>70-15 / ATCC MYA-4617 / FGSC 8958</strain>
    </source>
</reference>
<reference key="2">
    <citation type="journal article" date="2010" name="Autophagy">
        <title>The cysteine protease MoAtg4 interacts with MoAtg8 and is required for differentiation and pathogenesis in Magnaporthe oryzae.</title>
        <authorList>
            <person name="Liu T.B."/>
            <person name="Liu X.H."/>
            <person name="Lu J.P."/>
            <person name="Zhang L."/>
            <person name="Min H."/>
            <person name="Lin F.C."/>
        </authorList>
    </citation>
    <scope>FUNCTION</scope>
    <scope>INTERACTION WITH ATG8</scope>
    <scope>MUTAGENESIS OF CYS-206</scope>
    <scope>INDUCTION</scope>
    <scope>SUBCELLULAR LOCATION</scope>
</reference>
<accession>Q523C3</accession>
<accession>A4QRH7</accession>
<accession>G4N7F2</accession>
<organism>
    <name type="scientific">Pyricularia oryzae (strain 70-15 / ATCC MYA-4617 / FGSC 8958)</name>
    <name type="common">Rice blast fungus</name>
    <name type="synonym">Magnaporthe oryzae</name>
    <dbReference type="NCBI Taxonomy" id="242507"/>
    <lineage>
        <taxon>Eukaryota</taxon>
        <taxon>Fungi</taxon>
        <taxon>Dikarya</taxon>
        <taxon>Ascomycota</taxon>
        <taxon>Pezizomycotina</taxon>
        <taxon>Sordariomycetes</taxon>
        <taxon>Sordariomycetidae</taxon>
        <taxon>Magnaporthales</taxon>
        <taxon>Pyriculariaceae</taxon>
        <taxon>Pyricularia</taxon>
    </lineage>
</organism>
<feature type="chain" id="PRO_0000215864" description="Cysteine protease ATG4">
    <location>
        <begin position="1"/>
        <end position="491"/>
    </location>
</feature>
<feature type="region of interest" description="Disordered" evidence="3">
    <location>
        <begin position="53"/>
        <end position="137"/>
    </location>
</feature>
<feature type="region of interest" description="Disordered" evidence="3">
    <location>
        <begin position="457"/>
        <end position="491"/>
    </location>
</feature>
<feature type="compositionally biased region" description="Polar residues" evidence="3">
    <location>
        <begin position="61"/>
        <end position="72"/>
    </location>
</feature>
<feature type="compositionally biased region" description="Low complexity" evidence="3">
    <location>
        <begin position="126"/>
        <end position="135"/>
    </location>
</feature>
<feature type="compositionally biased region" description="Acidic residues" evidence="3">
    <location>
        <begin position="475"/>
        <end position="491"/>
    </location>
</feature>
<feature type="active site" description="Nucleophile" evidence="1">
    <location>
        <position position="206"/>
    </location>
</feature>
<feature type="active site" evidence="2">
    <location>
        <position position="385"/>
    </location>
</feature>
<feature type="active site" evidence="2">
    <location>
        <position position="387"/>
    </location>
</feature>
<feature type="mutagenesis site" description="Abolishes the proteolytic activity and decreases autophagy." evidence="4">
    <original>C</original>
    <variation>A</variation>
    <location>
        <position position="206"/>
    </location>
</feature>
<name>ATG4_PYRO7</name>
<protein>
    <recommendedName>
        <fullName>Cysteine protease ATG4</fullName>
        <ecNumber>3.4.22.-</ecNumber>
    </recommendedName>
    <alternativeName>
        <fullName>Autophagy-related protein 4</fullName>
    </alternativeName>
</protein>
<evidence type="ECO:0000250" key="1">
    <source>
        <dbReference type="UniProtKB" id="P53867"/>
    </source>
</evidence>
<evidence type="ECO:0000250" key="2">
    <source>
        <dbReference type="UniProtKB" id="Q9Y4P1"/>
    </source>
</evidence>
<evidence type="ECO:0000256" key="3">
    <source>
        <dbReference type="SAM" id="MobiDB-lite"/>
    </source>
</evidence>
<evidence type="ECO:0000269" key="4">
    <source>
    </source>
</evidence>
<evidence type="ECO:0000305" key="5"/>
<proteinExistence type="evidence at protein level"/>
<keyword id="KW-0072">Autophagy</keyword>
<keyword id="KW-0963">Cytoplasm</keyword>
<keyword id="KW-0378">Hydrolase</keyword>
<keyword id="KW-0539">Nucleus</keyword>
<keyword id="KW-0645">Protease</keyword>
<keyword id="KW-0653">Protein transport</keyword>
<keyword id="KW-1185">Reference proteome</keyword>
<keyword id="KW-0788">Thiol protease</keyword>
<keyword id="KW-0813">Transport</keyword>
<keyword id="KW-0833">Ubl conjugation pathway</keyword>
<dbReference type="EC" id="3.4.22.-"/>
<dbReference type="EMBL" id="CM001234">
    <property type="protein sequence ID" value="EHA50011.1"/>
    <property type="molecule type" value="Genomic_DNA"/>
</dbReference>
<dbReference type="RefSeq" id="XP_003716330.1">
    <property type="nucleotide sequence ID" value="XM_003716282.1"/>
</dbReference>
<dbReference type="SMR" id="Q523C3"/>
<dbReference type="FunCoup" id="Q523C3">
    <property type="interactions" value="297"/>
</dbReference>
<dbReference type="STRING" id="242507.Q523C3"/>
<dbReference type="MEROPS" id="C54.001"/>
<dbReference type="EnsemblFungi" id="MGG_03580T0">
    <property type="protein sequence ID" value="MGG_03580T0"/>
    <property type="gene ID" value="MGG_03580"/>
</dbReference>
<dbReference type="GeneID" id="2676731"/>
<dbReference type="KEGG" id="mgr:MGG_03580"/>
<dbReference type="VEuPathDB" id="FungiDB:MGG_03580"/>
<dbReference type="eggNOG" id="KOG2674">
    <property type="taxonomic scope" value="Eukaryota"/>
</dbReference>
<dbReference type="HOGENOM" id="CLU_021259_5_1_1"/>
<dbReference type="InParanoid" id="Q523C3"/>
<dbReference type="OMA" id="TGFGCMI"/>
<dbReference type="OrthoDB" id="2960936at2759"/>
<dbReference type="PHI-base" id="PHI:2072"/>
<dbReference type="Proteomes" id="UP000009058">
    <property type="component" value="Chromosome 4"/>
</dbReference>
<dbReference type="GO" id="GO:0005634">
    <property type="term" value="C:nucleus"/>
    <property type="evidence" value="ECO:0007669"/>
    <property type="project" value="UniProtKB-SubCell"/>
</dbReference>
<dbReference type="GO" id="GO:0000407">
    <property type="term" value="C:phagophore assembly site"/>
    <property type="evidence" value="ECO:0007669"/>
    <property type="project" value="UniProtKB-SubCell"/>
</dbReference>
<dbReference type="GO" id="GO:0004197">
    <property type="term" value="F:cysteine-type endopeptidase activity"/>
    <property type="evidence" value="ECO:0007669"/>
    <property type="project" value="TreeGrafter"/>
</dbReference>
<dbReference type="GO" id="GO:0019786">
    <property type="term" value="F:protein-phosphatidylethanolamide deconjugating activity"/>
    <property type="evidence" value="ECO:0007669"/>
    <property type="project" value="InterPro"/>
</dbReference>
<dbReference type="GO" id="GO:0035973">
    <property type="term" value="P:aggrephagy"/>
    <property type="evidence" value="ECO:0007669"/>
    <property type="project" value="TreeGrafter"/>
</dbReference>
<dbReference type="GO" id="GO:0000045">
    <property type="term" value="P:autophagosome assembly"/>
    <property type="evidence" value="ECO:0007669"/>
    <property type="project" value="TreeGrafter"/>
</dbReference>
<dbReference type="GO" id="GO:0000423">
    <property type="term" value="P:mitophagy"/>
    <property type="evidence" value="ECO:0007669"/>
    <property type="project" value="TreeGrafter"/>
</dbReference>
<dbReference type="GO" id="GO:0034727">
    <property type="term" value="P:piecemeal microautophagy of the nucleus"/>
    <property type="evidence" value="ECO:0007669"/>
    <property type="project" value="TreeGrafter"/>
</dbReference>
<dbReference type="GO" id="GO:0016485">
    <property type="term" value="P:protein processing"/>
    <property type="evidence" value="ECO:0007669"/>
    <property type="project" value="TreeGrafter"/>
</dbReference>
<dbReference type="GO" id="GO:0015031">
    <property type="term" value="P:protein transport"/>
    <property type="evidence" value="ECO:0007669"/>
    <property type="project" value="UniProtKB-KW"/>
</dbReference>
<dbReference type="InterPro" id="IPR038765">
    <property type="entry name" value="Papain-like_cys_pep_sf"/>
</dbReference>
<dbReference type="InterPro" id="IPR005078">
    <property type="entry name" value="Peptidase_C54"/>
</dbReference>
<dbReference type="InterPro" id="IPR046792">
    <property type="entry name" value="Peptidase_C54_cat"/>
</dbReference>
<dbReference type="PANTHER" id="PTHR22624:SF49">
    <property type="entry name" value="CYSTEINE PROTEASE"/>
    <property type="match status" value="1"/>
</dbReference>
<dbReference type="PANTHER" id="PTHR22624">
    <property type="entry name" value="CYSTEINE PROTEASE ATG4"/>
    <property type="match status" value="1"/>
</dbReference>
<dbReference type="Pfam" id="PF03416">
    <property type="entry name" value="Peptidase_C54"/>
    <property type="match status" value="1"/>
</dbReference>
<dbReference type="SUPFAM" id="SSF54001">
    <property type="entry name" value="Cysteine proteinases"/>
    <property type="match status" value="1"/>
</dbReference>
<gene>
    <name type="primary">ATG4</name>
    <name type="ORF">MGG_03580</name>
</gene>
<sequence>MDSAVAGAADIGRYGRRIVRMIWDPEPTNDPIANRPAWCLGYEYTLETNITSKTKGEDSKLSTATSSDQQRPPAQANKVPQMPSAQLPTEAAATALSGNTTPPTPEAALEPTKITSQPAAIDTPPDSVDSSFDSSMAYDDVPDDGGWPPAFLNDFESRIWMTYRSGFEPIPRSTDPTASSRMSFAMRLKTMADQQAGFTTDSGWGCMIRTGQSLLANSLLTCRLGRSWRRGQAPDEERKLLSLFADDPRAPYSIHNFVAHGAAKCGKYPGEWFGPSATARCIHALANATENSFRVYSTGDLPDVYEDSFMEVAKPDGKTFHPTLILISTRLGIDKINQVYWESLTATLQLPQSVGIAGGRPSSSHYFVGAQRSDEDQGSYLFYLDPHHTRPALPFHEDPQLYTPSDVDSCHTRRLRRLHIREMDPSMLIGFLILDEENWHAWKSSVKHVQGKSIITVSEHDPSKGSASGRPSAIDEVETLSDDDGDTVLDG</sequence>
<comment type="function">
    <text evidence="1 4">Cysteine protease that plays a key role in cytoplasm to vacuole transport (Cvt) and autophagy by mediating both proteolytic activation and delipidation of ATG8 (PubMed:19923912). Required for selective autophagic degradation of the nucleus (nucleophagy) as well as for mitophagy which contributes to regulate mitochondrial quantity and quality by eliminating the mitochondria to a basal level to fulfill cellular energy requirements and preventing excess ROS production. The protease activity is required for proteolytic activation of ATG8: cleaves the C-terminal amino acid of ATG8 to reveal a C-terminal glycine. ATG8 ubiquitin-like activity requires the exposure of the glycine at the C-terminus for its conjugation to phosphatidylethanolamine (PE) and its insertion to membranes, which is necessary for autophagy. The ATG8-PE conjugate mediates tethering between adjacent membranes and stimulates membrane hemifusion, leading to expansion of the autophagosomal membrane during autophagy. In addition to the protease activity, also catalyzes deconjugation of PE-conjugated forms of ATG8 during macroautophagy: ATG8 delipidation is required to release the protein from membranes, which facilitates multiple events during macroautophagy, and especially for efficient autophagosome biogenesis, the assembly of ATG9-containing tubulovesicular clusters into phagophores/autophagosomes, and for the disassembly of PAS-associated ATG components. ATG8 delipidation by ATG4 also recycles ATG8-PE generated on inappropriate membranes to maintain a reservoir of unlipidated ATG8 that is required for autophagosome formation at the PAS (By similarity).</text>
</comment>
<comment type="catalytic activity">
    <reaction evidence="1">
        <text>[protein]-C-terminal L-amino acid-glycyl-phosphatidylethanolamide + H2O = [protein]-C-terminal L-amino acid-glycine + a 1,2-diacyl-sn-glycero-3-phosphoethanolamine</text>
        <dbReference type="Rhea" id="RHEA:67548"/>
        <dbReference type="Rhea" id="RHEA-COMP:17323"/>
        <dbReference type="Rhea" id="RHEA-COMP:17324"/>
        <dbReference type="ChEBI" id="CHEBI:15377"/>
        <dbReference type="ChEBI" id="CHEBI:64612"/>
        <dbReference type="ChEBI" id="CHEBI:172940"/>
        <dbReference type="ChEBI" id="CHEBI:172941"/>
    </reaction>
    <physiologicalReaction direction="left-to-right" evidence="1">
        <dbReference type="Rhea" id="RHEA:67549"/>
    </physiologicalReaction>
</comment>
<comment type="subunit">
    <text evidence="4">Interacts with ATG8.</text>
</comment>
<comment type="subcellular location">
    <subcellularLocation>
        <location evidence="4">Cytoplasm</location>
    </subcellularLocation>
    <subcellularLocation>
        <location evidence="1">Nucleus</location>
    </subcellularLocation>
    <subcellularLocation>
        <location evidence="1">Preautophagosomal structure</location>
    </subcellularLocation>
</comment>
<comment type="induction">
    <text evidence="4">Expressed throughout growth and development.</text>
</comment>
<comment type="similarity">
    <text evidence="5">Belongs to the peptidase C54 family.</text>
</comment>